<keyword id="KW-0998">Cell outer membrane</keyword>
<keyword id="KW-0449">Lipoprotein</keyword>
<keyword id="KW-0472">Membrane</keyword>
<comment type="subcellular location">
    <subcellularLocation>
        <location evidence="2">Cell outer membrane</location>
        <topology evidence="2">Lipid-anchor</topology>
    </subcellularLocation>
</comment>
<organism>
    <name type="scientific">Helicobacter acinonychis</name>
    <name type="common">Helicobacter acinonyx</name>
    <dbReference type="NCBI Taxonomy" id="212"/>
    <lineage>
        <taxon>Bacteria</taxon>
        <taxon>Pseudomonadati</taxon>
        <taxon>Campylobacterota</taxon>
        <taxon>Epsilonproteobacteria</taxon>
        <taxon>Campylobacterales</taxon>
        <taxon>Helicobacteraceae</taxon>
        <taxon>Helicobacter</taxon>
    </lineage>
</organism>
<sequence length="125" mass="13923">NYHPASETIQALDENILLLKPAFQYSDNVAKEYENKCKNQIALKVEEILQNQGYKVISVDSSDKDDLSFAQKKEGYLTLSLSGEIVLRPDPKRTTQKKSEPGLLFSTGLDKMQGVLISAGFVKVT</sequence>
<reference key="1">
    <citation type="journal article" date="1995" name="Gene">
        <title>Genetic evidence for host specificity in the adhesin-encoding genes hxaA of Helicobacter acinonyx, hnaA of H. nemestrinae and hpaA of H. pylori.</title>
        <authorList>
            <person name="Evans D.G."/>
            <person name="Lampert H.C."/>
            <person name="Nakano H."/>
            <person name="Eaton K.A."/>
            <person name="Burnens A.P."/>
            <person name="Bronsdon M.A."/>
            <person name="Evans D.J. Jr."/>
        </authorList>
    </citation>
    <scope>NUCLEOTIDE SEQUENCE [GENOMIC DNA]</scope>
</reference>
<proteinExistence type="predicted"/>
<gene>
    <name type="primary">hpaA</name>
    <name type="synonym">hxaA</name>
</gene>
<feature type="chain" id="PRO_0000096162" description="Neuraminyllactose-binding hemagglutinin">
    <location>
        <begin position="1" status="less than"/>
        <end position="125" status="greater than"/>
    </location>
</feature>
<feature type="region of interest" description="N-acetyl-neuraminyl-alpha(2,3)-lactose binding motif" evidence="1">
    <location>
        <begin position="92"/>
        <end position="97"/>
    </location>
</feature>
<feature type="non-terminal residue">
    <location>
        <position position="1"/>
    </location>
</feature>
<feature type="non-terminal residue">
    <location>
        <position position="125"/>
    </location>
</feature>
<accession>Q47947</accession>
<evidence type="ECO:0000255" key="1"/>
<evidence type="ECO:0000305" key="2"/>
<protein>
    <recommendedName>
        <fullName>Neuraminyllactose-binding hemagglutinin</fullName>
    </recommendedName>
    <alternativeName>
        <fullName>Adhesin A</fullName>
    </alternativeName>
    <alternativeName>
        <fullName>Flagellar sheath adhesin</fullName>
    </alternativeName>
    <alternativeName>
        <fullName>N-acetylneuraminyllactose-binding fibrillar hemagglutinin receptor-binding subunit</fullName>
        <shortName>NLBH</shortName>
    </alternativeName>
</protein>
<dbReference type="EMBL" id="U27126">
    <property type="protein sequence ID" value="AAA85563.1"/>
    <property type="molecule type" value="Genomic_DNA"/>
</dbReference>
<dbReference type="PIR" id="PC4090">
    <property type="entry name" value="PC4090"/>
</dbReference>
<dbReference type="SMR" id="Q47947"/>
<dbReference type="GO" id="GO:0009279">
    <property type="term" value="C:cell outer membrane"/>
    <property type="evidence" value="ECO:0007669"/>
    <property type="project" value="UniProtKB-SubCell"/>
</dbReference>
<dbReference type="Gene3D" id="3.30.160.180">
    <property type="entry name" value="Putative neuraminyllactose-binding hemagglutinin homolog like domain"/>
    <property type="match status" value="1"/>
</dbReference>
<dbReference type="InterPro" id="IPR007876">
    <property type="entry name" value="NeuraminylLac-bd_hemagglutn"/>
</dbReference>
<dbReference type="InterPro" id="IPR038531">
    <property type="entry name" value="NeuraminylLac-bd_hemagglutn_sf"/>
</dbReference>
<dbReference type="Pfam" id="PF05211">
    <property type="entry name" value="NLBH"/>
    <property type="match status" value="1"/>
</dbReference>
<dbReference type="SUPFAM" id="SSF159594">
    <property type="entry name" value="XCC0632-like"/>
    <property type="match status" value="1"/>
</dbReference>
<name>HPAA_HELAC</name>